<sequence length="683" mass="78433">MIKRQKDRKFELVSKFKPAGDQQQAINKLTAGFEKGYKEQILEGATGTGKTFTMANIIAKLNKPTLVITHNKTLVGQLYGEFKGFFPNNAVEYFVSYYDYYQPEAYVPQSDTYIEKDSAINDEIDQLRHATTSALMERNDVIVVASVSCIYGLGDPKEYARSVLMIHEGQEYERNTLLRDLVNLQYDRNDIDFQRGRFRVRGDVVEIFPAGNSNHAYRVEFFGDEIDRIVEIDSLTGEVIGERESISLFPATHFMTNDEQLRRALKAISKEMKVQVKKFEGEGKLLEAERIKQRTTYDMEMMGEVGYTNGIENYSRHMEGRKVGEPPYTLLDFFPDDFLILIDESHATMPEIRAMYNGDRNRKKTLIDYGFRLPSALDNRPLKLAEFEKHVNQILYVSATPGDYELERTDHKVEQIIRPTGLLDPKIEVRPIEGQIDDLVGEINKRIDRNERVFVTTLTKKMAEDLTDYLKDLGIKVRYLHSDIKTLERMQILRDLRLGKFDVLIGINLLREGIDVPEVSLVAILDADKEGFLRAYRPLVQTMGRAARNANGEVIMYADTITDSMKAAIEATQRRRKLQEEFNKEHGIVPKTIIKPVHDVISITKPSEDSKKEKTDSFADLNFDELTAKQKKTMIKNLQEQMKEAAKKLDFEEAANLRDAIMELQSSSRRPKTRKGKALNGKR</sequence>
<gene>
    <name evidence="1" type="primary">uvrB</name>
    <name type="ordered locus">LBA0688</name>
</gene>
<proteinExistence type="inferred from homology"/>
<organism>
    <name type="scientific">Lactobacillus acidophilus (strain ATCC 700396 / NCK56 / N2 / NCFM)</name>
    <dbReference type="NCBI Taxonomy" id="272621"/>
    <lineage>
        <taxon>Bacteria</taxon>
        <taxon>Bacillati</taxon>
        <taxon>Bacillota</taxon>
        <taxon>Bacilli</taxon>
        <taxon>Lactobacillales</taxon>
        <taxon>Lactobacillaceae</taxon>
        <taxon>Lactobacillus</taxon>
    </lineage>
</organism>
<feature type="chain" id="PRO_0000227321" description="UvrABC system protein B">
    <location>
        <begin position="1"/>
        <end position="683"/>
    </location>
</feature>
<feature type="domain" description="Helicase ATP-binding" evidence="1">
    <location>
        <begin position="31"/>
        <end position="414"/>
    </location>
</feature>
<feature type="domain" description="Helicase C-terminal" evidence="1">
    <location>
        <begin position="435"/>
        <end position="601"/>
    </location>
</feature>
<feature type="domain" description="UVR" evidence="1">
    <location>
        <begin position="632"/>
        <end position="667"/>
    </location>
</feature>
<feature type="region of interest" description="Disordered" evidence="2">
    <location>
        <begin position="662"/>
        <end position="683"/>
    </location>
</feature>
<feature type="short sequence motif" description="Beta-hairpin">
    <location>
        <begin position="97"/>
        <end position="120"/>
    </location>
</feature>
<feature type="compositionally biased region" description="Basic residues" evidence="2">
    <location>
        <begin position="669"/>
        <end position="683"/>
    </location>
</feature>
<feature type="binding site" evidence="1">
    <location>
        <begin position="44"/>
        <end position="51"/>
    </location>
    <ligand>
        <name>ATP</name>
        <dbReference type="ChEBI" id="CHEBI:30616"/>
    </ligand>
</feature>
<keyword id="KW-0067">ATP-binding</keyword>
<keyword id="KW-0963">Cytoplasm</keyword>
<keyword id="KW-0227">DNA damage</keyword>
<keyword id="KW-0228">DNA excision</keyword>
<keyword id="KW-0234">DNA repair</keyword>
<keyword id="KW-0267">Excision nuclease</keyword>
<keyword id="KW-0547">Nucleotide-binding</keyword>
<keyword id="KW-1185">Reference proteome</keyword>
<keyword id="KW-0742">SOS response</keyword>
<evidence type="ECO:0000255" key="1">
    <source>
        <dbReference type="HAMAP-Rule" id="MF_00204"/>
    </source>
</evidence>
<evidence type="ECO:0000256" key="2">
    <source>
        <dbReference type="SAM" id="MobiDB-lite"/>
    </source>
</evidence>
<reference key="1">
    <citation type="journal article" date="2005" name="Proc. Natl. Acad. Sci. U.S.A.">
        <title>Complete genome sequence of the probiotic lactic acid bacterium Lactobacillus acidophilus NCFM.</title>
        <authorList>
            <person name="Altermann E."/>
            <person name="Russell W.M."/>
            <person name="Azcarate-Peril M.A."/>
            <person name="Barrangou R."/>
            <person name="Buck B.L."/>
            <person name="McAuliffe O."/>
            <person name="Souther N."/>
            <person name="Dobson A."/>
            <person name="Duong T."/>
            <person name="Callanan M."/>
            <person name="Lick S."/>
            <person name="Hamrick A."/>
            <person name="Cano R."/>
            <person name="Klaenhammer T.R."/>
        </authorList>
    </citation>
    <scope>NUCLEOTIDE SEQUENCE [LARGE SCALE GENOMIC DNA]</scope>
    <source>
        <strain>ATCC 700396 / NCK56 / N2 / NCFM</strain>
    </source>
</reference>
<protein>
    <recommendedName>
        <fullName evidence="1">UvrABC system protein B</fullName>
        <shortName evidence="1">Protein UvrB</shortName>
    </recommendedName>
    <alternativeName>
        <fullName evidence="1">Excinuclease ABC subunit B</fullName>
    </alternativeName>
</protein>
<accession>Q5FL61</accession>
<name>UVRB_LACAC</name>
<comment type="function">
    <text evidence="1">The UvrABC repair system catalyzes the recognition and processing of DNA lesions. A damage recognition complex composed of 2 UvrA and 2 UvrB subunits scans DNA for abnormalities. Upon binding of the UvrA(2)B(2) complex to a putative damaged site, the DNA wraps around one UvrB monomer. DNA wrap is dependent on ATP binding by UvrB and probably causes local melting of the DNA helix, facilitating insertion of UvrB beta-hairpin between the DNA strands. Then UvrB probes one DNA strand for the presence of a lesion. If a lesion is found the UvrA subunits dissociate and the UvrB-DNA preincision complex is formed. This complex is subsequently bound by UvrC and the second UvrB is released. If no lesion is found, the DNA wraps around the other UvrB subunit that will check the other stand for damage.</text>
</comment>
<comment type="subunit">
    <text evidence="1">Forms a heterotetramer with UvrA during the search for lesions. Interacts with UvrC in an incision complex.</text>
</comment>
<comment type="subcellular location">
    <subcellularLocation>
        <location evidence="1">Cytoplasm</location>
    </subcellularLocation>
</comment>
<comment type="domain">
    <text evidence="1">The beta-hairpin motif is involved in DNA binding.</text>
</comment>
<comment type="similarity">
    <text evidence="1">Belongs to the UvrB family.</text>
</comment>
<dbReference type="EMBL" id="CP000033">
    <property type="protein sequence ID" value="AAV42563.1"/>
    <property type="molecule type" value="Genomic_DNA"/>
</dbReference>
<dbReference type="RefSeq" id="WP_003546586.1">
    <property type="nucleotide sequence ID" value="NC_006814.3"/>
</dbReference>
<dbReference type="RefSeq" id="YP_193594.1">
    <property type="nucleotide sequence ID" value="NC_006814.3"/>
</dbReference>
<dbReference type="SMR" id="Q5FL61"/>
<dbReference type="STRING" id="272621.LBA0688"/>
<dbReference type="GeneID" id="93290185"/>
<dbReference type="KEGG" id="lac:LBA0688"/>
<dbReference type="PATRIC" id="fig|272621.13.peg.657"/>
<dbReference type="eggNOG" id="COG0556">
    <property type="taxonomic scope" value="Bacteria"/>
</dbReference>
<dbReference type="HOGENOM" id="CLU_009621_2_1_9"/>
<dbReference type="OrthoDB" id="9806651at2"/>
<dbReference type="BioCyc" id="LACI272621:G1G49-709-MONOMER"/>
<dbReference type="Proteomes" id="UP000006381">
    <property type="component" value="Chromosome"/>
</dbReference>
<dbReference type="GO" id="GO:0005737">
    <property type="term" value="C:cytoplasm"/>
    <property type="evidence" value="ECO:0007669"/>
    <property type="project" value="UniProtKB-SubCell"/>
</dbReference>
<dbReference type="GO" id="GO:0009380">
    <property type="term" value="C:excinuclease repair complex"/>
    <property type="evidence" value="ECO:0007669"/>
    <property type="project" value="InterPro"/>
</dbReference>
<dbReference type="GO" id="GO:0005524">
    <property type="term" value="F:ATP binding"/>
    <property type="evidence" value="ECO:0007669"/>
    <property type="project" value="UniProtKB-UniRule"/>
</dbReference>
<dbReference type="GO" id="GO:0016887">
    <property type="term" value="F:ATP hydrolysis activity"/>
    <property type="evidence" value="ECO:0007669"/>
    <property type="project" value="InterPro"/>
</dbReference>
<dbReference type="GO" id="GO:0003677">
    <property type="term" value="F:DNA binding"/>
    <property type="evidence" value="ECO:0007669"/>
    <property type="project" value="UniProtKB-UniRule"/>
</dbReference>
<dbReference type="GO" id="GO:0009381">
    <property type="term" value="F:excinuclease ABC activity"/>
    <property type="evidence" value="ECO:0007669"/>
    <property type="project" value="UniProtKB-UniRule"/>
</dbReference>
<dbReference type="GO" id="GO:0006289">
    <property type="term" value="P:nucleotide-excision repair"/>
    <property type="evidence" value="ECO:0007669"/>
    <property type="project" value="UniProtKB-UniRule"/>
</dbReference>
<dbReference type="GO" id="GO:0009432">
    <property type="term" value="P:SOS response"/>
    <property type="evidence" value="ECO:0007669"/>
    <property type="project" value="UniProtKB-UniRule"/>
</dbReference>
<dbReference type="CDD" id="cd17916">
    <property type="entry name" value="DEXHc_UvrB"/>
    <property type="match status" value="1"/>
</dbReference>
<dbReference type="CDD" id="cd18790">
    <property type="entry name" value="SF2_C_UvrB"/>
    <property type="match status" value="1"/>
</dbReference>
<dbReference type="Gene3D" id="3.40.50.300">
    <property type="entry name" value="P-loop containing nucleotide triphosphate hydrolases"/>
    <property type="match status" value="3"/>
</dbReference>
<dbReference type="Gene3D" id="4.10.860.10">
    <property type="entry name" value="UVR domain"/>
    <property type="match status" value="1"/>
</dbReference>
<dbReference type="HAMAP" id="MF_00204">
    <property type="entry name" value="UvrB"/>
    <property type="match status" value="1"/>
</dbReference>
<dbReference type="InterPro" id="IPR006935">
    <property type="entry name" value="Helicase/UvrB_N"/>
</dbReference>
<dbReference type="InterPro" id="IPR014001">
    <property type="entry name" value="Helicase_ATP-bd"/>
</dbReference>
<dbReference type="InterPro" id="IPR001650">
    <property type="entry name" value="Helicase_C-like"/>
</dbReference>
<dbReference type="InterPro" id="IPR027417">
    <property type="entry name" value="P-loop_NTPase"/>
</dbReference>
<dbReference type="InterPro" id="IPR001943">
    <property type="entry name" value="UVR_dom"/>
</dbReference>
<dbReference type="InterPro" id="IPR036876">
    <property type="entry name" value="UVR_dom_sf"/>
</dbReference>
<dbReference type="InterPro" id="IPR004807">
    <property type="entry name" value="UvrB"/>
</dbReference>
<dbReference type="InterPro" id="IPR041471">
    <property type="entry name" value="UvrB_inter"/>
</dbReference>
<dbReference type="InterPro" id="IPR024759">
    <property type="entry name" value="UvrB_YAD/RRR_dom"/>
</dbReference>
<dbReference type="NCBIfam" id="NF003673">
    <property type="entry name" value="PRK05298.1"/>
    <property type="match status" value="1"/>
</dbReference>
<dbReference type="NCBIfam" id="TIGR00631">
    <property type="entry name" value="uvrb"/>
    <property type="match status" value="1"/>
</dbReference>
<dbReference type="PANTHER" id="PTHR24029">
    <property type="entry name" value="UVRABC SYSTEM PROTEIN B"/>
    <property type="match status" value="1"/>
</dbReference>
<dbReference type="PANTHER" id="PTHR24029:SF0">
    <property type="entry name" value="UVRABC SYSTEM PROTEIN B"/>
    <property type="match status" value="1"/>
</dbReference>
<dbReference type="Pfam" id="PF00271">
    <property type="entry name" value="Helicase_C"/>
    <property type="match status" value="1"/>
</dbReference>
<dbReference type="Pfam" id="PF04851">
    <property type="entry name" value="ResIII"/>
    <property type="match status" value="1"/>
</dbReference>
<dbReference type="Pfam" id="PF02151">
    <property type="entry name" value="UVR"/>
    <property type="match status" value="1"/>
</dbReference>
<dbReference type="Pfam" id="PF12344">
    <property type="entry name" value="UvrB"/>
    <property type="match status" value="1"/>
</dbReference>
<dbReference type="Pfam" id="PF17757">
    <property type="entry name" value="UvrB_inter"/>
    <property type="match status" value="1"/>
</dbReference>
<dbReference type="SMART" id="SM00487">
    <property type="entry name" value="DEXDc"/>
    <property type="match status" value="1"/>
</dbReference>
<dbReference type="SMART" id="SM00490">
    <property type="entry name" value="HELICc"/>
    <property type="match status" value="1"/>
</dbReference>
<dbReference type="SUPFAM" id="SSF46600">
    <property type="entry name" value="C-terminal UvrC-binding domain of UvrB"/>
    <property type="match status" value="1"/>
</dbReference>
<dbReference type="SUPFAM" id="SSF52540">
    <property type="entry name" value="P-loop containing nucleoside triphosphate hydrolases"/>
    <property type="match status" value="2"/>
</dbReference>
<dbReference type="PROSITE" id="PS51192">
    <property type="entry name" value="HELICASE_ATP_BIND_1"/>
    <property type="match status" value="1"/>
</dbReference>
<dbReference type="PROSITE" id="PS51194">
    <property type="entry name" value="HELICASE_CTER"/>
    <property type="match status" value="1"/>
</dbReference>
<dbReference type="PROSITE" id="PS50151">
    <property type="entry name" value="UVR"/>
    <property type="match status" value="1"/>
</dbReference>